<protein>
    <recommendedName>
        <fullName evidence="1">Uracil phosphoribosyltransferase</fullName>
        <ecNumber evidence="1">2.4.2.9</ecNumber>
    </recommendedName>
    <alternativeName>
        <fullName evidence="1">UMP pyrophosphorylase</fullName>
    </alternativeName>
    <alternativeName>
        <fullName evidence="1">UPRTase</fullName>
    </alternativeName>
</protein>
<gene>
    <name evidence="1" type="primary">upp</name>
    <name type="ordered locus">Glov_1078</name>
</gene>
<reference key="1">
    <citation type="submission" date="2008-05" db="EMBL/GenBank/DDBJ databases">
        <title>Complete sequence of chromosome of Geobacter lovleyi SZ.</title>
        <authorList>
            <consortium name="US DOE Joint Genome Institute"/>
            <person name="Lucas S."/>
            <person name="Copeland A."/>
            <person name="Lapidus A."/>
            <person name="Glavina del Rio T."/>
            <person name="Dalin E."/>
            <person name="Tice H."/>
            <person name="Bruce D."/>
            <person name="Goodwin L."/>
            <person name="Pitluck S."/>
            <person name="Chertkov O."/>
            <person name="Meincke L."/>
            <person name="Brettin T."/>
            <person name="Detter J.C."/>
            <person name="Han C."/>
            <person name="Tapia R."/>
            <person name="Kuske C.R."/>
            <person name="Schmutz J."/>
            <person name="Larimer F."/>
            <person name="Land M."/>
            <person name="Hauser L."/>
            <person name="Kyrpides N."/>
            <person name="Mikhailova N."/>
            <person name="Sung Y."/>
            <person name="Fletcher K.E."/>
            <person name="Ritalahti K.M."/>
            <person name="Loeffler F.E."/>
            <person name="Richardson P."/>
        </authorList>
    </citation>
    <scope>NUCLEOTIDE SEQUENCE [LARGE SCALE GENOMIC DNA]</scope>
    <source>
        <strain>ATCC BAA-1151 / DSM 17278 / SZ</strain>
    </source>
</reference>
<evidence type="ECO:0000255" key="1">
    <source>
        <dbReference type="HAMAP-Rule" id="MF_01218"/>
    </source>
</evidence>
<proteinExistence type="inferred from homology"/>
<accession>B3E677</accession>
<feature type="chain" id="PRO_1000139131" description="Uracil phosphoribosyltransferase">
    <location>
        <begin position="1"/>
        <end position="208"/>
    </location>
</feature>
<feature type="binding site" evidence="1">
    <location>
        <position position="78"/>
    </location>
    <ligand>
        <name>5-phospho-alpha-D-ribose 1-diphosphate</name>
        <dbReference type="ChEBI" id="CHEBI:58017"/>
    </ligand>
</feature>
<feature type="binding site" evidence="1">
    <location>
        <position position="103"/>
    </location>
    <ligand>
        <name>5-phospho-alpha-D-ribose 1-diphosphate</name>
        <dbReference type="ChEBI" id="CHEBI:58017"/>
    </ligand>
</feature>
<feature type="binding site" evidence="1">
    <location>
        <begin position="130"/>
        <end position="138"/>
    </location>
    <ligand>
        <name>5-phospho-alpha-D-ribose 1-diphosphate</name>
        <dbReference type="ChEBI" id="CHEBI:58017"/>
    </ligand>
</feature>
<feature type="binding site" evidence="1">
    <location>
        <position position="193"/>
    </location>
    <ligand>
        <name>uracil</name>
        <dbReference type="ChEBI" id="CHEBI:17568"/>
    </ligand>
</feature>
<feature type="binding site" evidence="1">
    <location>
        <begin position="198"/>
        <end position="200"/>
    </location>
    <ligand>
        <name>uracil</name>
        <dbReference type="ChEBI" id="CHEBI:17568"/>
    </ligand>
</feature>
<feature type="binding site" evidence="1">
    <location>
        <position position="199"/>
    </location>
    <ligand>
        <name>5-phospho-alpha-D-ribose 1-diphosphate</name>
        <dbReference type="ChEBI" id="CHEBI:58017"/>
    </ligand>
</feature>
<keyword id="KW-0021">Allosteric enzyme</keyword>
<keyword id="KW-0328">Glycosyltransferase</keyword>
<keyword id="KW-0342">GTP-binding</keyword>
<keyword id="KW-0460">Magnesium</keyword>
<keyword id="KW-0547">Nucleotide-binding</keyword>
<keyword id="KW-1185">Reference proteome</keyword>
<keyword id="KW-0808">Transferase</keyword>
<dbReference type="EC" id="2.4.2.9" evidence="1"/>
<dbReference type="EMBL" id="CP001089">
    <property type="protein sequence ID" value="ACD94801.1"/>
    <property type="molecule type" value="Genomic_DNA"/>
</dbReference>
<dbReference type="RefSeq" id="WP_012469151.1">
    <property type="nucleotide sequence ID" value="NC_010814.1"/>
</dbReference>
<dbReference type="SMR" id="B3E677"/>
<dbReference type="STRING" id="398767.Glov_1078"/>
<dbReference type="KEGG" id="glo:Glov_1078"/>
<dbReference type="eggNOG" id="COG0035">
    <property type="taxonomic scope" value="Bacteria"/>
</dbReference>
<dbReference type="HOGENOM" id="CLU_067096_2_2_7"/>
<dbReference type="OrthoDB" id="9781675at2"/>
<dbReference type="UniPathway" id="UPA00574">
    <property type="reaction ID" value="UER00636"/>
</dbReference>
<dbReference type="Proteomes" id="UP000002420">
    <property type="component" value="Chromosome"/>
</dbReference>
<dbReference type="GO" id="GO:0005525">
    <property type="term" value="F:GTP binding"/>
    <property type="evidence" value="ECO:0007669"/>
    <property type="project" value="UniProtKB-KW"/>
</dbReference>
<dbReference type="GO" id="GO:0000287">
    <property type="term" value="F:magnesium ion binding"/>
    <property type="evidence" value="ECO:0007669"/>
    <property type="project" value="UniProtKB-UniRule"/>
</dbReference>
<dbReference type="GO" id="GO:0004845">
    <property type="term" value="F:uracil phosphoribosyltransferase activity"/>
    <property type="evidence" value="ECO:0007669"/>
    <property type="project" value="UniProtKB-UniRule"/>
</dbReference>
<dbReference type="GO" id="GO:0044206">
    <property type="term" value="P:UMP salvage"/>
    <property type="evidence" value="ECO:0007669"/>
    <property type="project" value="UniProtKB-UniRule"/>
</dbReference>
<dbReference type="GO" id="GO:0006223">
    <property type="term" value="P:uracil salvage"/>
    <property type="evidence" value="ECO:0007669"/>
    <property type="project" value="InterPro"/>
</dbReference>
<dbReference type="CDD" id="cd06223">
    <property type="entry name" value="PRTases_typeI"/>
    <property type="match status" value="1"/>
</dbReference>
<dbReference type="FunFam" id="3.40.50.2020:FF:000003">
    <property type="entry name" value="Uracil phosphoribosyltransferase"/>
    <property type="match status" value="1"/>
</dbReference>
<dbReference type="Gene3D" id="3.40.50.2020">
    <property type="match status" value="1"/>
</dbReference>
<dbReference type="HAMAP" id="MF_01218_B">
    <property type="entry name" value="Upp_B"/>
    <property type="match status" value="1"/>
</dbReference>
<dbReference type="InterPro" id="IPR000836">
    <property type="entry name" value="PRibTrfase_dom"/>
</dbReference>
<dbReference type="InterPro" id="IPR029057">
    <property type="entry name" value="PRTase-like"/>
</dbReference>
<dbReference type="InterPro" id="IPR034332">
    <property type="entry name" value="Upp_B"/>
</dbReference>
<dbReference type="InterPro" id="IPR050054">
    <property type="entry name" value="UPRTase/APRTase"/>
</dbReference>
<dbReference type="InterPro" id="IPR005765">
    <property type="entry name" value="Ura_phspho_trans"/>
</dbReference>
<dbReference type="NCBIfam" id="NF001097">
    <property type="entry name" value="PRK00129.1"/>
    <property type="match status" value="1"/>
</dbReference>
<dbReference type="NCBIfam" id="TIGR01091">
    <property type="entry name" value="upp"/>
    <property type="match status" value="1"/>
</dbReference>
<dbReference type="PANTHER" id="PTHR32315">
    <property type="entry name" value="ADENINE PHOSPHORIBOSYLTRANSFERASE"/>
    <property type="match status" value="1"/>
</dbReference>
<dbReference type="PANTHER" id="PTHR32315:SF4">
    <property type="entry name" value="URACIL PHOSPHORIBOSYLTRANSFERASE, CHLOROPLASTIC"/>
    <property type="match status" value="1"/>
</dbReference>
<dbReference type="Pfam" id="PF14681">
    <property type="entry name" value="UPRTase"/>
    <property type="match status" value="1"/>
</dbReference>
<dbReference type="SUPFAM" id="SSF53271">
    <property type="entry name" value="PRTase-like"/>
    <property type="match status" value="1"/>
</dbReference>
<organism>
    <name type="scientific">Trichlorobacter lovleyi (strain ATCC BAA-1151 / DSM 17278 / SZ)</name>
    <name type="common">Geobacter lovleyi</name>
    <dbReference type="NCBI Taxonomy" id="398767"/>
    <lineage>
        <taxon>Bacteria</taxon>
        <taxon>Pseudomonadati</taxon>
        <taxon>Thermodesulfobacteriota</taxon>
        <taxon>Desulfuromonadia</taxon>
        <taxon>Geobacterales</taxon>
        <taxon>Geobacteraceae</taxon>
        <taxon>Trichlorobacter</taxon>
    </lineage>
</organism>
<name>UPP_TRIL1</name>
<sequence>MAIYEVKHPLIQHKLGLLRKADLSTKQFRELASEVARLLTYEATKDLETESITINGWAGPVTVQQIKGKKITIVPILRAGLGMMNGVLDMIPSAKVSVVGLYRNEETLEPVAYYEKFTTDMEERTALIIDPMLATGGSLLATIEMLKATGCRRIKGLFLVAVPEGLEKISSAHPDVEIYVASIDERLNEHGYILPGLGDAGDKIFGTK</sequence>
<comment type="function">
    <text evidence="1">Catalyzes the conversion of uracil and 5-phospho-alpha-D-ribose 1-diphosphate (PRPP) to UMP and diphosphate.</text>
</comment>
<comment type="catalytic activity">
    <reaction evidence="1">
        <text>UMP + diphosphate = 5-phospho-alpha-D-ribose 1-diphosphate + uracil</text>
        <dbReference type="Rhea" id="RHEA:13017"/>
        <dbReference type="ChEBI" id="CHEBI:17568"/>
        <dbReference type="ChEBI" id="CHEBI:33019"/>
        <dbReference type="ChEBI" id="CHEBI:57865"/>
        <dbReference type="ChEBI" id="CHEBI:58017"/>
        <dbReference type="EC" id="2.4.2.9"/>
    </reaction>
</comment>
<comment type="cofactor">
    <cofactor evidence="1">
        <name>Mg(2+)</name>
        <dbReference type="ChEBI" id="CHEBI:18420"/>
    </cofactor>
    <text evidence="1">Binds 1 Mg(2+) ion per subunit. The magnesium is bound as Mg-PRPP.</text>
</comment>
<comment type="activity regulation">
    <text evidence="1">Allosterically activated by GTP.</text>
</comment>
<comment type="pathway">
    <text evidence="1">Pyrimidine metabolism; UMP biosynthesis via salvage pathway; UMP from uracil: step 1/1.</text>
</comment>
<comment type="similarity">
    <text evidence="1">Belongs to the UPRTase family.</text>
</comment>